<organism>
    <name type="scientific">Alligator mississippiensis</name>
    <name type="common">American alligator</name>
    <dbReference type="NCBI Taxonomy" id="8496"/>
    <lineage>
        <taxon>Eukaryota</taxon>
        <taxon>Metazoa</taxon>
        <taxon>Chordata</taxon>
        <taxon>Craniata</taxon>
        <taxon>Vertebrata</taxon>
        <taxon>Euteleostomi</taxon>
        <taxon>Archelosauria</taxon>
        <taxon>Archosauria</taxon>
        <taxon>Crocodylia</taxon>
        <taxon>Alligatoridae</taxon>
        <taxon>Alligatorinae</taxon>
        <taxon>Alligator</taxon>
    </lineage>
</organism>
<keyword id="KW-0027">Amidation</keyword>
<keyword id="KW-0903">Direct protein sequencing</keyword>
<keyword id="KW-0527">Neuropeptide</keyword>
<keyword id="KW-0964">Secreted</keyword>
<proteinExistence type="evidence at protein level"/>
<accession>P68007</accession>
<accession>P09640</accession>
<sequence>YPSKPDNPGEDAPAEDMARYYSALRHYINLITRQRY</sequence>
<gene>
    <name type="primary">NPY</name>
</gene>
<feature type="peptide" id="PRO_0000044789" description="Neuropeptide Y">
    <location>
        <begin position="1"/>
        <end position="36"/>
    </location>
</feature>
<feature type="modified residue" description="Tyrosine amide" evidence="2">
    <location>
        <position position="36"/>
    </location>
</feature>
<comment type="function">
    <text evidence="1">NPY is implicated in the control of feeding and in secretion of gonadotrophin-release hormone.</text>
</comment>
<comment type="subcellular location">
    <subcellularLocation>
        <location>Secreted</location>
    </subcellularLocation>
</comment>
<comment type="similarity">
    <text evidence="3">Belongs to the NPY family.</text>
</comment>
<protein>
    <recommendedName>
        <fullName>Neuropeptide Y</fullName>
        <shortName>NPY</shortName>
    </recommendedName>
</protein>
<reference key="1">
    <citation type="journal article" date="1993" name="Peptides">
        <title>Neuroendocrine peptides (NPY, GRP, VIP, somatostatin) from the brain and stomach of the alligator.</title>
        <authorList>
            <person name="Wang Y."/>
            <person name="Conlon J.M."/>
        </authorList>
    </citation>
    <scope>PROTEIN SEQUENCE</scope>
    <source>
        <tissue>Brain</tissue>
    </source>
</reference>
<reference key="2">
    <citation type="journal article" date="1993" name="Regul. Pept.">
        <title>Primary structure of neuropeptide Y from brains of the American alligator (Alligator mississippiensis).</title>
        <authorList>
            <person name="Parker D.B."/>
            <person name="McRory J.E."/>
            <person name="Fischer W.H."/>
            <person name="Park M."/>
            <person name="Sherwood N.M."/>
        </authorList>
    </citation>
    <scope>PROTEIN SEQUENCE</scope>
    <scope>AMIDATION AT TYR-36</scope>
    <source>
        <tissue>Brain</tissue>
    </source>
</reference>
<name>NPY_ALLMI</name>
<dbReference type="SMR" id="P68007"/>
<dbReference type="eggNOG" id="ENOG502S2BU">
    <property type="taxonomic scope" value="Eukaryota"/>
</dbReference>
<dbReference type="GO" id="GO:0005615">
    <property type="term" value="C:extracellular space"/>
    <property type="evidence" value="ECO:0007669"/>
    <property type="project" value="TreeGrafter"/>
</dbReference>
<dbReference type="GO" id="GO:0005184">
    <property type="term" value="F:neuropeptide hormone activity"/>
    <property type="evidence" value="ECO:0007669"/>
    <property type="project" value="TreeGrafter"/>
</dbReference>
<dbReference type="GO" id="GO:0031841">
    <property type="term" value="F:neuropeptide Y receptor binding"/>
    <property type="evidence" value="ECO:0007669"/>
    <property type="project" value="TreeGrafter"/>
</dbReference>
<dbReference type="GO" id="GO:0007631">
    <property type="term" value="P:feeding behavior"/>
    <property type="evidence" value="ECO:0007669"/>
    <property type="project" value="TreeGrafter"/>
</dbReference>
<dbReference type="GO" id="GO:0007218">
    <property type="term" value="P:neuropeptide signaling pathway"/>
    <property type="evidence" value="ECO:0007669"/>
    <property type="project" value="UniProtKB-KW"/>
</dbReference>
<dbReference type="CDD" id="cd00126">
    <property type="entry name" value="PAH"/>
    <property type="match status" value="1"/>
</dbReference>
<dbReference type="Gene3D" id="6.10.250.900">
    <property type="match status" value="1"/>
</dbReference>
<dbReference type="InterPro" id="IPR001955">
    <property type="entry name" value="Pancreatic_hormone-like"/>
</dbReference>
<dbReference type="InterPro" id="IPR020392">
    <property type="entry name" value="Pancreatic_hormone-like_CS"/>
</dbReference>
<dbReference type="PANTHER" id="PTHR10533">
    <property type="entry name" value="NEUROPEPTIDE Y/PANCREATIC HORMONE/PEPTIDE YY"/>
    <property type="match status" value="1"/>
</dbReference>
<dbReference type="PANTHER" id="PTHR10533:SF5">
    <property type="entry name" value="PRO-NEUROPEPTIDE Y"/>
    <property type="match status" value="1"/>
</dbReference>
<dbReference type="Pfam" id="PF00159">
    <property type="entry name" value="Hormone_3"/>
    <property type="match status" value="1"/>
</dbReference>
<dbReference type="PRINTS" id="PR00278">
    <property type="entry name" value="PANCHORMONE"/>
</dbReference>
<dbReference type="SMART" id="SM00309">
    <property type="entry name" value="PAH"/>
    <property type="match status" value="1"/>
</dbReference>
<dbReference type="PROSITE" id="PS00265">
    <property type="entry name" value="PANCREATIC_HORMONE_1"/>
    <property type="match status" value="1"/>
</dbReference>
<dbReference type="PROSITE" id="PS50276">
    <property type="entry name" value="PANCREATIC_HORMONE_2"/>
    <property type="match status" value="1"/>
</dbReference>
<evidence type="ECO:0000250" key="1"/>
<evidence type="ECO:0000269" key="2">
    <source>
    </source>
</evidence>
<evidence type="ECO:0000305" key="3"/>